<gene>
    <name type="primary">PEP1</name>
    <name type="synonym">PPC</name>
</gene>
<comment type="function">
    <text>Through the carboxylation of phosphoenolpyruvate (PEP) it forms oxaloacetate, a four-carbon dicarboxylic acid source for the tricarboxylic acid cycle.</text>
</comment>
<comment type="catalytic activity">
    <reaction>
        <text>oxaloacetate + phosphate = phosphoenolpyruvate + hydrogencarbonate</text>
        <dbReference type="Rhea" id="RHEA:28370"/>
        <dbReference type="ChEBI" id="CHEBI:16452"/>
        <dbReference type="ChEBI" id="CHEBI:17544"/>
        <dbReference type="ChEBI" id="CHEBI:43474"/>
        <dbReference type="ChEBI" id="CHEBI:58702"/>
        <dbReference type="EC" id="4.1.1.31"/>
    </reaction>
</comment>
<comment type="cofactor">
    <cofactor evidence="1">
        <name>Mg(2+)</name>
        <dbReference type="ChEBI" id="CHEBI:18420"/>
    </cofactor>
</comment>
<comment type="activity regulation">
    <text>By light-reversible phosphorylation.</text>
</comment>
<comment type="pathway">
    <text>Photosynthesis; C4 acid pathway.</text>
</comment>
<comment type="subunit">
    <text>Homotetramer.</text>
</comment>
<comment type="subcellular location">
    <subcellularLocation>
        <location>Cytoplasm</location>
    </subcellularLocation>
</comment>
<comment type="similarity">
    <text evidence="4">Belongs to the PEPCase type 1 family.</text>
</comment>
<comment type="sequence caution" evidence="4">
    <conflict type="erroneous initiation">
        <sequence resource="EMBL-CDS" id="CAA32722"/>
    </conflict>
</comment>
<organism>
    <name type="scientific">Zea mays</name>
    <name type="common">Maize</name>
    <dbReference type="NCBI Taxonomy" id="4577"/>
    <lineage>
        <taxon>Eukaryota</taxon>
        <taxon>Viridiplantae</taxon>
        <taxon>Streptophyta</taxon>
        <taxon>Embryophyta</taxon>
        <taxon>Tracheophyta</taxon>
        <taxon>Spermatophyta</taxon>
        <taxon>Magnoliopsida</taxon>
        <taxon>Liliopsida</taxon>
        <taxon>Poales</taxon>
        <taxon>Poaceae</taxon>
        <taxon>PACMAD clade</taxon>
        <taxon>Panicoideae</taxon>
        <taxon>Andropogonodae</taxon>
        <taxon>Andropogoneae</taxon>
        <taxon>Tripsacinae</taxon>
        <taxon>Zea</taxon>
    </lineage>
</organism>
<evidence type="ECO:0000250" key="1"/>
<evidence type="ECO:0000269" key="2">
    <source>
    </source>
</evidence>
<evidence type="ECO:0000269" key="3">
    <source>
    </source>
</evidence>
<evidence type="ECO:0000305" key="4"/>
<evidence type="ECO:0007829" key="5">
    <source>
        <dbReference type="PDB" id="1JQO"/>
    </source>
</evidence>
<evidence type="ECO:0007829" key="6">
    <source>
        <dbReference type="PDB" id="5VYJ"/>
    </source>
</evidence>
<evidence type="ECO:0007829" key="7">
    <source>
        <dbReference type="PDB" id="6MGI"/>
    </source>
</evidence>
<evidence type="ECO:0007829" key="8">
    <source>
        <dbReference type="PDB" id="6U2T"/>
    </source>
</evidence>
<evidence type="ECO:0007829" key="9">
    <source>
        <dbReference type="PDB" id="6V3O"/>
    </source>
</evidence>
<protein>
    <recommendedName>
        <fullName>Phosphoenolpyruvate carboxylase 1</fullName>
        <shortName>PEPC 1</shortName>
        <shortName>PEPCase 1</shortName>
        <ecNumber>4.1.1.31</ecNumber>
    </recommendedName>
</protein>
<keyword id="KW-0002">3D-structure</keyword>
<keyword id="KW-0021">Allosteric enzyme</keyword>
<keyword id="KW-0120">Carbon dioxide fixation</keyword>
<keyword id="KW-0963">Cytoplasm</keyword>
<keyword id="KW-0903">Direct protein sequencing</keyword>
<keyword id="KW-0456">Lyase</keyword>
<keyword id="KW-0460">Magnesium</keyword>
<keyword id="KW-0597">Phosphoprotein</keyword>
<keyword id="KW-0602">Photosynthesis</keyword>
<keyword id="KW-1185">Reference proteome</keyword>
<feature type="chain" id="PRO_0000166667" description="Phosphoenolpyruvate carboxylase 1">
    <location>
        <begin position="1"/>
        <end position="970"/>
    </location>
</feature>
<feature type="active site" evidence="3">
    <location>
        <position position="177"/>
    </location>
</feature>
<feature type="active site" evidence="3">
    <location>
        <position position="606"/>
    </location>
</feature>
<feature type="active site" evidence="3">
    <location>
        <position position="647"/>
    </location>
</feature>
<feature type="modified residue" description="Phosphoserine" evidence="2">
    <location>
        <position position="15"/>
    </location>
</feature>
<feature type="sequence conflict" description="In Ref. 2 and 3." evidence="4" ref="2 3">
    <original>A</original>
    <variation>D</variation>
    <location>
        <position position="239"/>
    </location>
</feature>
<feature type="sequence conflict" description="In Ref. 2; CAA27270." evidence="4" ref="2">
    <original>EL</original>
    <variation>DV</variation>
    <location>
        <begin position="338"/>
        <end position="339"/>
    </location>
</feature>
<feature type="sequence conflict" description="In Ref. 2 and 3." evidence="4" ref="2 3">
    <original>P</original>
    <variation>S</variation>
    <location>
        <position position="482"/>
    </location>
</feature>
<feature type="sequence conflict" description="In Ref. 3; CAA33663." evidence="4" ref="3">
    <original>D</original>
    <variation>E</variation>
    <location>
        <position position="509"/>
    </location>
</feature>
<feature type="sequence conflict" description="In Ref. 2 and 3." evidence="4" ref="2 3">
    <original>QPL</original>
    <variation>PAV</variation>
    <location>
        <begin position="557"/>
        <end position="559"/>
    </location>
</feature>
<feature type="sequence conflict" description="In Ref. 2 and 3." evidence="4" ref="2 3">
    <original>D</original>
    <variation>S</variation>
    <location>
        <position position="570"/>
    </location>
</feature>
<feature type="sequence conflict" description="In Ref. 2; CAA27270." evidence="4" ref="2">
    <original>SA</original>
    <variation>LR</variation>
    <location>
        <begin position="573"/>
        <end position="574"/>
    </location>
</feature>
<feature type="sequence conflict" description="In Ref. 2; CAA27270." evidence="4" ref="2">
    <original>C</original>
    <variation>S</variation>
    <location>
        <position position="687"/>
    </location>
</feature>
<feature type="sequence conflict" description="In Ref. 2; CAA27270." evidence="4" ref="2">
    <original>A</original>
    <variation>P</variation>
    <location>
        <position position="736"/>
    </location>
</feature>
<feature type="sequence conflict" description="In Ref. 2; CAA27270." evidence="4" ref="2">
    <original>A</original>
    <variation>R</variation>
    <location>
        <position position="963"/>
    </location>
</feature>
<feature type="helix" evidence="8">
    <location>
        <begin position="17"/>
        <end position="23"/>
    </location>
</feature>
<feature type="helix" evidence="8">
    <location>
        <begin position="34"/>
        <end position="53"/>
    </location>
</feature>
<feature type="helix" evidence="8">
    <location>
        <begin position="55"/>
        <end position="73"/>
    </location>
</feature>
<feature type="helix" evidence="8">
    <location>
        <begin position="78"/>
        <end position="89"/>
    </location>
</feature>
<feature type="helix" evidence="8">
    <location>
        <begin position="92"/>
        <end position="118"/>
    </location>
</feature>
<feature type="helix" evidence="8">
    <location>
        <begin position="124"/>
        <end position="126"/>
    </location>
</feature>
<feature type="helix" evidence="8">
    <location>
        <begin position="131"/>
        <end position="135"/>
    </location>
</feature>
<feature type="turn" evidence="8">
    <location>
        <begin position="137"/>
        <end position="139"/>
    </location>
</feature>
<feature type="helix" evidence="8">
    <location>
        <begin position="143"/>
        <end position="152"/>
    </location>
</feature>
<feature type="helix" evidence="8">
    <location>
        <begin position="158"/>
        <end position="166"/>
    </location>
</feature>
<feature type="strand" evidence="8">
    <location>
        <begin position="169"/>
        <end position="174"/>
    </location>
</feature>
<feature type="helix" evidence="8">
    <location>
        <begin position="184"/>
        <end position="200"/>
    </location>
</feature>
<feature type="helix" evidence="8">
    <location>
        <begin position="207"/>
        <end position="225"/>
    </location>
</feature>
<feature type="helix" evidence="8">
    <location>
        <begin position="237"/>
        <end position="244"/>
    </location>
</feature>
<feature type="helix" evidence="8">
    <location>
        <begin position="246"/>
        <end position="250"/>
    </location>
</feature>
<feature type="helix" evidence="8">
    <location>
        <begin position="252"/>
        <end position="268"/>
    </location>
</feature>
<feature type="turn" evidence="8">
    <location>
        <begin position="269"/>
        <end position="271"/>
    </location>
</feature>
<feature type="strand" evidence="8">
    <location>
        <begin position="283"/>
        <end position="287"/>
    </location>
</feature>
<feature type="turn" evidence="8">
    <location>
        <begin position="289"/>
        <end position="291"/>
    </location>
</feature>
<feature type="helix" evidence="8">
    <location>
        <begin position="301"/>
        <end position="329"/>
    </location>
</feature>
<feature type="helix" evidence="8">
    <location>
        <begin position="337"/>
        <end position="345"/>
    </location>
</feature>
<feature type="turn" evidence="6">
    <location>
        <begin position="349"/>
        <end position="353"/>
    </location>
</feature>
<feature type="strand" evidence="9">
    <location>
        <begin position="357"/>
        <end position="361"/>
    </location>
</feature>
<feature type="helix" evidence="8">
    <location>
        <begin position="370"/>
        <end position="394"/>
    </location>
</feature>
<feature type="strand" evidence="7">
    <location>
        <begin position="402"/>
        <end position="405"/>
    </location>
</feature>
<feature type="helix" evidence="8">
    <location>
        <begin position="409"/>
        <end position="425"/>
    </location>
</feature>
<feature type="helix" evidence="8">
    <location>
        <begin position="429"/>
        <end position="432"/>
    </location>
</feature>
<feature type="helix" evidence="8">
    <location>
        <begin position="435"/>
        <end position="446"/>
    </location>
</feature>
<feature type="turn" evidence="8">
    <location>
        <begin position="447"/>
        <end position="449"/>
    </location>
</feature>
<feature type="strand" evidence="8">
    <location>
        <begin position="450"/>
        <end position="458"/>
    </location>
</feature>
<feature type="helix" evidence="8">
    <location>
        <begin position="459"/>
        <end position="473"/>
    </location>
</feature>
<feature type="turn" evidence="8">
    <location>
        <begin position="478"/>
        <end position="480"/>
    </location>
</feature>
<feature type="helix" evidence="8">
    <location>
        <begin position="483"/>
        <end position="495"/>
    </location>
</feature>
<feature type="strand" evidence="8">
    <location>
        <begin position="496"/>
        <end position="498"/>
    </location>
</feature>
<feature type="helix" evidence="8">
    <location>
        <begin position="509"/>
        <end position="523"/>
    </location>
</feature>
<feature type="helix" evidence="8">
    <location>
        <begin position="526"/>
        <end position="528"/>
    </location>
</feature>
<feature type="strand" evidence="8">
    <location>
        <begin position="529"/>
        <end position="535"/>
    </location>
</feature>
<feature type="helix" evidence="8">
    <location>
        <begin position="540"/>
        <end position="552"/>
    </location>
</feature>
<feature type="strand" evidence="8">
    <location>
        <begin position="561"/>
        <end position="565"/>
    </location>
</feature>
<feature type="helix" evidence="8">
    <location>
        <begin position="568"/>
        <end position="582"/>
    </location>
</feature>
<feature type="helix" evidence="8">
    <location>
        <begin position="585"/>
        <end position="591"/>
    </location>
</feature>
<feature type="strand" evidence="8">
    <location>
        <begin position="594"/>
        <end position="599"/>
    </location>
</feature>
<feature type="helix" evidence="8">
    <location>
        <begin position="601"/>
        <end position="608"/>
    </location>
</feature>
<feature type="helix" evidence="8">
    <location>
        <begin position="610"/>
        <end position="631"/>
    </location>
</feature>
<feature type="strand" evidence="8">
    <location>
        <begin position="634"/>
        <end position="639"/>
    </location>
</feature>
<feature type="helix" evidence="9">
    <location>
        <begin position="644"/>
        <end position="646"/>
    </location>
</feature>
<feature type="helix" evidence="8">
    <location>
        <begin position="651"/>
        <end position="657"/>
    </location>
</feature>
<feature type="strand" evidence="8">
    <location>
        <begin position="667"/>
        <end position="672"/>
    </location>
</feature>
<feature type="turn" evidence="8">
    <location>
        <begin position="674"/>
        <end position="676"/>
    </location>
</feature>
<feature type="helix" evidence="8">
    <location>
        <begin position="677"/>
        <end position="681"/>
    </location>
</feature>
<feature type="helix" evidence="8">
    <location>
        <begin position="684"/>
        <end position="703"/>
    </location>
</feature>
<feature type="helix" evidence="8">
    <location>
        <begin position="711"/>
        <end position="732"/>
    </location>
</feature>
<feature type="helix" evidence="8">
    <location>
        <begin position="738"/>
        <end position="745"/>
    </location>
</feature>
<feature type="helix" evidence="8">
    <location>
        <begin position="748"/>
        <end position="753"/>
    </location>
</feature>
<feature type="turn" evidence="8">
    <location>
        <begin position="754"/>
        <end position="757"/>
    </location>
</feature>
<feature type="strand" evidence="8">
    <location>
        <begin position="761"/>
        <end position="767"/>
    </location>
</feature>
<feature type="helix" evidence="9">
    <location>
        <begin position="768"/>
        <end position="770"/>
    </location>
</feature>
<feature type="helix" evidence="8">
    <location>
        <begin position="774"/>
        <end position="783"/>
    </location>
</feature>
<feature type="helix" evidence="8">
    <location>
        <begin position="788"/>
        <end position="791"/>
    </location>
</feature>
<feature type="helix" evidence="8">
    <location>
        <begin position="794"/>
        <end position="804"/>
    </location>
</feature>
<feature type="helix" evidence="8">
    <location>
        <begin position="808"/>
        <end position="818"/>
    </location>
</feature>
<feature type="helix" evidence="8">
    <location>
        <begin position="820"/>
        <end position="834"/>
    </location>
</feature>
<feature type="helix" evidence="8">
    <location>
        <begin position="838"/>
        <end position="848"/>
    </location>
</feature>
<feature type="helix" evidence="8">
    <location>
        <begin position="851"/>
        <end position="853"/>
    </location>
</feature>
<feature type="helix" evidence="8">
    <location>
        <begin position="854"/>
        <end position="873"/>
    </location>
</feature>
<feature type="turn" evidence="8">
    <location>
        <begin position="874"/>
        <end position="876"/>
    </location>
</feature>
<feature type="turn" evidence="8">
    <location>
        <begin position="880"/>
        <end position="883"/>
    </location>
</feature>
<feature type="helix" evidence="8">
    <location>
        <begin position="885"/>
        <end position="892"/>
    </location>
</feature>
<feature type="helix" evidence="8">
    <location>
        <begin position="895"/>
        <end position="913"/>
    </location>
</feature>
<feature type="strand" evidence="9">
    <location>
        <begin position="930"/>
        <end position="932"/>
    </location>
</feature>
<feature type="helix" evidence="9">
    <location>
        <begin position="934"/>
        <end position="937"/>
    </location>
</feature>
<feature type="turn" evidence="9">
    <location>
        <begin position="938"/>
        <end position="941"/>
    </location>
</feature>
<feature type="strand" evidence="5">
    <location>
        <begin position="942"/>
        <end position="944"/>
    </location>
</feature>
<feature type="strand" evidence="9">
    <location>
        <begin position="946"/>
        <end position="948"/>
    </location>
</feature>
<feature type="helix" evidence="8">
    <location>
        <begin position="951"/>
        <end position="966"/>
    </location>
</feature>
<accession>P04711</accession>
<proteinExistence type="evidence at protein level"/>
<sequence length="970" mass="109297">MASTKAPGPGEKHHSIDAQLRQLVPGKVSEDDKLIEYDALLVDRFLNILQDLHGPSLREFVQECYEVSADYEGKGDTTKLGELGAKLTGLAPADAILVASSILHMLNLANLAEEVQIAHRRRNSKLKKGGFADEGSATTESDIEETLKRLVSEVGKSPEEVFEALKNQTVDLVFTAHPTQSARRSLLQKNARIRNCLTQLNAKDITDDDKQELDEALQREIQAAFRTDEIRRAQPTPQAEMRYGMSYIHETVWKGVPKFLRRVDTALKNIGINERLPYNVSLIRFSSWMGGDRDGNPRVTPEVTRDVCLLARMMAANLYIDQIEELMFELSMWRCNDELRVRAEELHSSSGSKVTKYYIEFWKQIPPNEPYRVILGHVRDKLYNTRERARHLLASGVSEISAESSFTSIEEFLEPLELCYKSLCDCGDKAIADGSLLDLLRQVFTFGLSLVKLDIRQESERHTDVIDAITTHLGIGSYREWPEDKRQEWLLSELRGKRPLLPPDLPQTDEIADVIGAFHVLAELPPDSFGPYIISMATAPSDVLAVELLQRECGVRQPLPVVPLFERLADLQSAPASVERLFSVDWYMDRIKGKQQVMVGYSDSGKDAGRLSAAWQLYRAQEEMAQVAKRYGVKLTLFHGRGGTVGRGGGPTHLAILSQPPDTINGSIRVTVQGEVIEFCFGEEHLCFQTLQRFTAATLEHGMHPPVSPKPEWRKLMDEMAVVATEEYRSVVVKEARFVEYFRSATPETEYGRMNIGSRPAKRRPGGGITTLRAIPWIFSWTQTRFHLPVWLGVGAAFKFAIDKDVRNFQVLKEMYNEWPFFRVTLDLLEMVFAKGDPGIAGLYDELLVAEELKPFGKQLRDKYVETQQLLLQIAGHKDILEGDPFLKQGLVLRNPYITTLNVFQAYTLKRIRDPNFKVTPQPPLSKEFADENKPAGLVKLNPASEYPPGLEDTLILTMKGIAAGMQNTG</sequence>
<dbReference type="EC" id="4.1.1.31"/>
<dbReference type="EMBL" id="X15238">
    <property type="protein sequence ID" value="CAA33316.1"/>
    <property type="molecule type" value="mRNA"/>
</dbReference>
<dbReference type="EMBL" id="X03613">
    <property type="protein sequence ID" value="CAA27270.1"/>
    <property type="molecule type" value="mRNA"/>
</dbReference>
<dbReference type="EMBL" id="X14581">
    <property type="protein sequence ID" value="CAA32724.1"/>
    <property type="molecule type" value="Genomic_DNA"/>
</dbReference>
<dbReference type="EMBL" id="X14579">
    <property type="protein sequence ID" value="CAA32722.1"/>
    <property type="status" value="ALT_INIT"/>
    <property type="molecule type" value="Genomic_DNA"/>
</dbReference>
<dbReference type="EMBL" id="X14580">
    <property type="protein sequence ID" value="CAA32723.1"/>
    <property type="molecule type" value="Genomic_DNA"/>
</dbReference>
<dbReference type="EMBL" id="X15642">
    <property type="protein sequence ID" value="CAA33663.1"/>
    <property type="molecule type" value="Genomic_DNA"/>
</dbReference>
<dbReference type="EMBL" id="X07168">
    <property type="protein sequence ID" value="CAA30158.1"/>
    <property type="molecule type" value="mRNA"/>
</dbReference>
<dbReference type="PDB" id="1JQO">
    <property type="method" value="X-ray"/>
    <property type="resolution" value="3.00 A"/>
    <property type="chains" value="A/B=1-970"/>
</dbReference>
<dbReference type="PDB" id="5VYJ">
    <property type="method" value="X-ray"/>
    <property type="resolution" value="3.30 A"/>
    <property type="chains" value="A/B/C/D=1-970"/>
</dbReference>
<dbReference type="PDB" id="6MGI">
    <property type="method" value="X-ray"/>
    <property type="resolution" value="2.99 A"/>
    <property type="chains" value="A/B=1-970"/>
</dbReference>
<dbReference type="PDB" id="6U2T">
    <property type="method" value="X-ray"/>
    <property type="resolution" value="2.80 A"/>
    <property type="chains" value="A/B/C/D=1-970"/>
</dbReference>
<dbReference type="PDB" id="6V3O">
    <property type="method" value="X-ray"/>
    <property type="resolution" value="2.91 A"/>
    <property type="chains" value="A/B/C/D/E/F/G/H=1-970"/>
</dbReference>
<dbReference type="PDBsum" id="1JQO"/>
<dbReference type="PDBsum" id="5VYJ"/>
<dbReference type="PDBsum" id="6MGI"/>
<dbReference type="PDBsum" id="6U2T"/>
<dbReference type="PDBsum" id="6V3O"/>
<dbReference type="SMR" id="P04711"/>
<dbReference type="STRING" id="4577.P04711"/>
<dbReference type="iPTMnet" id="P04711"/>
<dbReference type="PaxDb" id="4577-GRMZM2G083841_P01"/>
<dbReference type="MaizeGDB" id="30066"/>
<dbReference type="eggNOG" id="ENOG502QPVS">
    <property type="taxonomic scope" value="Eukaryota"/>
</dbReference>
<dbReference type="InParanoid" id="P04711"/>
<dbReference type="BRENDA" id="4.1.1.31">
    <property type="organism ID" value="6752"/>
</dbReference>
<dbReference type="SABIO-RK" id="P04711"/>
<dbReference type="UniPathway" id="UPA00322"/>
<dbReference type="EvolutionaryTrace" id="P04711"/>
<dbReference type="Proteomes" id="UP000007305">
    <property type="component" value="Unplaced"/>
</dbReference>
<dbReference type="ExpressionAtlas" id="P04711">
    <property type="expression patterns" value="baseline and differential"/>
</dbReference>
<dbReference type="GO" id="GO:0005829">
    <property type="term" value="C:cytosol"/>
    <property type="evidence" value="ECO:0000318"/>
    <property type="project" value="GO_Central"/>
</dbReference>
<dbReference type="GO" id="GO:0008964">
    <property type="term" value="F:phosphoenolpyruvate carboxylase activity"/>
    <property type="evidence" value="ECO:0000314"/>
    <property type="project" value="CACAO"/>
</dbReference>
<dbReference type="GO" id="GO:0015977">
    <property type="term" value="P:carbon fixation"/>
    <property type="evidence" value="ECO:0007669"/>
    <property type="project" value="UniProtKB-KW"/>
</dbReference>
<dbReference type="GO" id="GO:0048366">
    <property type="term" value="P:leaf development"/>
    <property type="evidence" value="ECO:0000318"/>
    <property type="project" value="GO_Central"/>
</dbReference>
<dbReference type="GO" id="GO:0015979">
    <property type="term" value="P:photosynthesis"/>
    <property type="evidence" value="ECO:0007669"/>
    <property type="project" value="UniProtKB-KW"/>
</dbReference>
<dbReference type="GO" id="GO:0060359">
    <property type="term" value="P:response to ammonium ion"/>
    <property type="evidence" value="ECO:0000304"/>
    <property type="project" value="AgBase"/>
</dbReference>
<dbReference type="GO" id="GO:0009735">
    <property type="term" value="P:response to cytokinin"/>
    <property type="evidence" value="ECO:0000304"/>
    <property type="project" value="AgBase"/>
</dbReference>
<dbReference type="GO" id="GO:0010167">
    <property type="term" value="P:response to nitrate"/>
    <property type="evidence" value="ECO:0000304"/>
    <property type="project" value="AgBase"/>
</dbReference>
<dbReference type="GO" id="GO:0006099">
    <property type="term" value="P:tricarboxylic acid cycle"/>
    <property type="evidence" value="ECO:0007669"/>
    <property type="project" value="InterPro"/>
</dbReference>
<dbReference type="FunFam" id="1.20.1440.90:FF:000001">
    <property type="entry name" value="Phosphoenolpyruvate carboxylase 1"/>
    <property type="match status" value="1"/>
</dbReference>
<dbReference type="Gene3D" id="1.20.1440.90">
    <property type="entry name" value="Phosphoenolpyruvate/pyruvate domain"/>
    <property type="match status" value="1"/>
</dbReference>
<dbReference type="HAMAP" id="MF_00595">
    <property type="entry name" value="PEPcase_type1"/>
    <property type="match status" value="1"/>
</dbReference>
<dbReference type="InterPro" id="IPR021135">
    <property type="entry name" value="PEP_COase"/>
</dbReference>
<dbReference type="InterPro" id="IPR022805">
    <property type="entry name" value="PEP_COase_bac/pln-type"/>
</dbReference>
<dbReference type="InterPro" id="IPR018129">
    <property type="entry name" value="PEP_COase_Lys_AS"/>
</dbReference>
<dbReference type="InterPro" id="IPR033129">
    <property type="entry name" value="PEPCASE_His_AS"/>
</dbReference>
<dbReference type="InterPro" id="IPR015813">
    <property type="entry name" value="Pyrv/PenolPyrv_kinase-like_dom"/>
</dbReference>
<dbReference type="NCBIfam" id="NF000584">
    <property type="entry name" value="PRK00009.1"/>
    <property type="match status" value="1"/>
</dbReference>
<dbReference type="PANTHER" id="PTHR30523">
    <property type="entry name" value="PHOSPHOENOLPYRUVATE CARBOXYLASE"/>
    <property type="match status" value="1"/>
</dbReference>
<dbReference type="PANTHER" id="PTHR30523:SF5">
    <property type="entry name" value="PHOSPHOENOLPYRUVATE CARBOXYLASE 1"/>
    <property type="match status" value="1"/>
</dbReference>
<dbReference type="Pfam" id="PF00311">
    <property type="entry name" value="PEPcase"/>
    <property type="match status" value="1"/>
</dbReference>
<dbReference type="PRINTS" id="PR00150">
    <property type="entry name" value="PEPCARBXLASE"/>
</dbReference>
<dbReference type="SUPFAM" id="SSF51621">
    <property type="entry name" value="Phosphoenolpyruvate/pyruvate domain"/>
    <property type="match status" value="1"/>
</dbReference>
<dbReference type="PROSITE" id="PS00781">
    <property type="entry name" value="PEPCASE_1"/>
    <property type="match status" value="1"/>
</dbReference>
<dbReference type="PROSITE" id="PS00393">
    <property type="entry name" value="PEPCASE_2"/>
    <property type="match status" value="1"/>
</dbReference>
<name>CAPP1_MAIZE</name>
<reference key="1">
    <citation type="journal article" date="1989" name="Plant Mol. Biol.">
        <title>Structure and expression of the maize gene encoding the phosphoenolpyruvate carboxylase isozyme involved in C4 photosynthesis.</title>
        <authorList>
            <person name="Hudspeth R.L."/>
            <person name="Grula J.W."/>
        </authorList>
    </citation>
    <scope>NUCLEOTIDE SEQUENCE</scope>
    <source>
        <strain>cv. B73</strain>
        <tissue>Leaf</tissue>
    </source>
</reference>
<reference key="2">
    <citation type="journal article" date="1986" name="Nucleic Acids Res.">
        <title>Cloning and sequence analysis of cDNA encoding active phosphoenolpyruvate carboxylase of the C4-pathway from maize.</title>
        <authorList>
            <person name="Izui K."/>
            <person name="Ishijima S."/>
            <person name="Yamaguchi Y."/>
            <person name="Katagiri F."/>
            <person name="Murata T."/>
            <person name="Shigesada K."/>
            <person name="Sugiyama T."/>
            <person name="Katsuki H."/>
        </authorList>
    </citation>
    <scope>NUCLEOTIDE SEQUENCE [MRNA] OF 39-970</scope>
</reference>
<reference key="3">
    <citation type="journal article" date="1989" name="Eur. J. Biochem.">
        <title>Complete structure of the gene for phosphoenolpyruvate carboxylase from maize.</title>
        <authorList>
            <person name="Matsuoka M."/>
            <person name="Minami E."/>
        </authorList>
    </citation>
    <scope>NUCLEOTIDE SEQUENCE [GENOMIC DNA]</scope>
    <source>
        <strain>cv. Golden cross Bantam</strain>
    </source>
</reference>
<reference key="4">
    <citation type="journal article" date="1989" name="J. Biochem.">
        <title>Maize phosphoenolpyruvate carboxylase involved in C4 photosynthesis: nucleotide sequence analysis of the 5' flanking region of the gene.</title>
        <authorList>
            <person name="Yanagisawa S."/>
            <person name="Izui K."/>
        </authorList>
    </citation>
    <scope>NUCLEOTIDE SEQUENCE [GENOMIC DNA] OF 1-3</scope>
    <source>
        <strain>cv. H84</strain>
        <tissue>Leaf</tissue>
    </source>
</reference>
<reference key="5">
    <citation type="journal article" date="1988" name="FEBS Lett.">
        <title>Further analysis of cDNA clones for maize phosphoenolpyruvate carboxylase involved in C4 photosynthesis. Nucleotide sequence of entire open reading frame and evidence for polyadenylation of mRNA at multiple sites in vivo.</title>
        <authorList>
            <person name="Yanagisawa S."/>
            <person name="Izui K."/>
            <person name="Yamaguchi Y."/>
            <person name="Shigesada K."/>
            <person name="Katsuki H."/>
        </authorList>
    </citation>
    <scope>NUCLEOTIDE SEQUENCE [MRNA] OF 1-82</scope>
</reference>
<reference key="6">
    <citation type="journal article" date="1990" name="Biochim. Biophys. Acta">
        <title>Isolation and sequence of an active-site peptide from maize leaf phosphoenolpyruvate carboxylase inactivated by pyridoxal 5'-phosphate.</title>
        <authorList>
            <person name="Jiao J.-A."/>
            <person name="Podesta F.E."/>
            <person name="Chollet R."/>
            <person name="O'Leary M.H."/>
            <person name="Andreo C.S."/>
        </authorList>
    </citation>
    <scope>ACTIVE SITE</scope>
    <scope>PROTEIN SEQUENCE OF 599-610</scope>
</reference>
<reference key="7">
    <citation type="journal article" date="1991" name="Plant Physiol.">
        <title>In vivo regulatory phosphorylation site in C4-leaf phosphoenolpyruvate carboxylase from maize and sorghum.</title>
        <authorList>
            <person name="Jiao J.-A."/>
            <person name="Vidal J."/>
            <person name="Echevarria C."/>
            <person name="Chollet R."/>
        </authorList>
    </citation>
    <scope>PHOSPHORYLATION AT SER-15</scope>
</reference>
<reference key="8">
    <citation type="journal article" date="2002" name="Structure">
        <title>Crystal structures of C4 form maize and quaternary complex of E. coli phosphoenolpyruvate carboxylases.</title>
        <authorList>
            <person name="Matsumura H."/>
            <person name="Xie Y."/>
            <person name="Shirakata S."/>
            <person name="Inoue T."/>
            <person name="Yoshinaga T."/>
            <person name="Ueno Y."/>
            <person name="Izui K."/>
            <person name="Kai Y."/>
        </authorList>
    </citation>
    <scope>X-RAY CRYSTALLOGRAPHY (3.0 ANGSTROMS)</scope>
</reference>